<name>YIDD_STRA1</name>
<keyword id="KW-1003">Cell membrane</keyword>
<keyword id="KW-0472">Membrane</keyword>
<sequence>MLKSFLIFLVRFYQKNISPAFPASCRYRPTCSTYMIEAIQKHGLKGVLMGIARILRCHPLAHGGNDPVPDHFSLRRNKTDISD</sequence>
<reference key="1">
    <citation type="journal article" date="2005" name="Proc. Natl. Acad. Sci. U.S.A.">
        <title>Genome analysis of multiple pathogenic isolates of Streptococcus agalactiae: implications for the microbial 'pan-genome'.</title>
        <authorList>
            <person name="Tettelin H."/>
            <person name="Masignani V."/>
            <person name="Cieslewicz M.J."/>
            <person name="Donati C."/>
            <person name="Medini D."/>
            <person name="Ward N.L."/>
            <person name="Angiuoli S.V."/>
            <person name="Crabtree J."/>
            <person name="Jones A.L."/>
            <person name="Durkin A.S."/>
            <person name="DeBoy R.T."/>
            <person name="Davidsen T.M."/>
            <person name="Mora M."/>
            <person name="Scarselli M."/>
            <person name="Margarit y Ros I."/>
            <person name="Peterson J.D."/>
            <person name="Hauser C.R."/>
            <person name="Sundaram J.P."/>
            <person name="Nelson W.C."/>
            <person name="Madupu R."/>
            <person name="Brinkac L.M."/>
            <person name="Dodson R.J."/>
            <person name="Rosovitz M.J."/>
            <person name="Sullivan S.A."/>
            <person name="Daugherty S.C."/>
            <person name="Haft D.H."/>
            <person name="Selengut J."/>
            <person name="Gwinn M.L."/>
            <person name="Zhou L."/>
            <person name="Zafar N."/>
            <person name="Khouri H."/>
            <person name="Radune D."/>
            <person name="Dimitrov G."/>
            <person name="Watkins K."/>
            <person name="O'Connor K.J."/>
            <person name="Smith S."/>
            <person name="Utterback T.R."/>
            <person name="White O."/>
            <person name="Rubens C.E."/>
            <person name="Grandi G."/>
            <person name="Madoff L.C."/>
            <person name="Kasper D.L."/>
            <person name="Telford J.L."/>
            <person name="Wessels M.R."/>
            <person name="Rappuoli R."/>
            <person name="Fraser C.M."/>
        </authorList>
    </citation>
    <scope>NUCLEOTIDE SEQUENCE [LARGE SCALE GENOMIC DNA]</scope>
    <source>
        <strain>ATCC 27591 / A909 / CDC SS700</strain>
    </source>
</reference>
<dbReference type="EMBL" id="CP000114">
    <property type="protein sequence ID" value="ABA44506.1"/>
    <property type="molecule type" value="Genomic_DNA"/>
</dbReference>
<dbReference type="KEGG" id="sak:SAK_1607"/>
<dbReference type="HOGENOM" id="CLU_144811_5_2_9"/>
<dbReference type="GO" id="GO:0005886">
    <property type="term" value="C:plasma membrane"/>
    <property type="evidence" value="ECO:0007669"/>
    <property type="project" value="UniProtKB-SubCell"/>
</dbReference>
<dbReference type="HAMAP" id="MF_00386">
    <property type="entry name" value="UPF0161_YidD"/>
    <property type="match status" value="1"/>
</dbReference>
<dbReference type="InterPro" id="IPR002696">
    <property type="entry name" value="Membr_insert_effic_factor_YidD"/>
</dbReference>
<dbReference type="NCBIfam" id="TIGR00278">
    <property type="entry name" value="membrane protein insertion efficiency factor YidD"/>
    <property type="match status" value="1"/>
</dbReference>
<dbReference type="PANTHER" id="PTHR33383">
    <property type="entry name" value="MEMBRANE PROTEIN INSERTION EFFICIENCY FACTOR-RELATED"/>
    <property type="match status" value="1"/>
</dbReference>
<dbReference type="PANTHER" id="PTHR33383:SF1">
    <property type="entry name" value="MEMBRANE PROTEIN INSERTION EFFICIENCY FACTOR-RELATED"/>
    <property type="match status" value="1"/>
</dbReference>
<dbReference type="Pfam" id="PF01809">
    <property type="entry name" value="YidD"/>
    <property type="match status" value="1"/>
</dbReference>
<dbReference type="SMART" id="SM01234">
    <property type="entry name" value="Haemolytic"/>
    <property type="match status" value="1"/>
</dbReference>
<proteinExistence type="inferred from homology"/>
<gene>
    <name type="ordered locus">SAK_1607</name>
</gene>
<evidence type="ECO:0000255" key="1">
    <source>
        <dbReference type="HAMAP-Rule" id="MF_00386"/>
    </source>
</evidence>
<evidence type="ECO:0000256" key="2">
    <source>
        <dbReference type="SAM" id="MobiDB-lite"/>
    </source>
</evidence>
<accession>Q3JZU3</accession>
<feature type="chain" id="PRO_0000253176" description="Putative membrane protein insertion efficiency factor">
    <location>
        <begin position="1"/>
        <end position="83"/>
    </location>
</feature>
<feature type="region of interest" description="Disordered" evidence="2">
    <location>
        <begin position="63"/>
        <end position="83"/>
    </location>
</feature>
<feature type="compositionally biased region" description="Basic and acidic residues" evidence="2">
    <location>
        <begin position="68"/>
        <end position="83"/>
    </location>
</feature>
<organism>
    <name type="scientific">Streptococcus agalactiae serotype Ia (strain ATCC 27591 / A909 / CDC SS700)</name>
    <dbReference type="NCBI Taxonomy" id="205921"/>
    <lineage>
        <taxon>Bacteria</taxon>
        <taxon>Bacillati</taxon>
        <taxon>Bacillota</taxon>
        <taxon>Bacilli</taxon>
        <taxon>Lactobacillales</taxon>
        <taxon>Streptococcaceae</taxon>
        <taxon>Streptococcus</taxon>
    </lineage>
</organism>
<comment type="function">
    <text evidence="1">Could be involved in insertion of integral membrane proteins into the membrane.</text>
</comment>
<comment type="subcellular location">
    <subcellularLocation>
        <location evidence="1">Cell membrane</location>
        <topology evidence="1">Peripheral membrane protein</topology>
        <orientation evidence="1">Cytoplasmic side</orientation>
    </subcellularLocation>
</comment>
<comment type="similarity">
    <text evidence="1">Belongs to the UPF0161 family.</text>
</comment>
<protein>
    <recommendedName>
        <fullName evidence="1">Putative membrane protein insertion efficiency factor</fullName>
    </recommendedName>
</protein>